<accession>P70227</accession>
<accession>Q5DWM4</accession>
<accession>Q8CED5</accession>
<accession>Q91Z08</accession>
<keyword id="KW-0002">3D-structure</keyword>
<keyword id="KW-0067">ATP-binding</keyword>
<keyword id="KW-0106">Calcium</keyword>
<keyword id="KW-0107">Calcium channel</keyword>
<keyword id="KW-0109">Calcium transport</keyword>
<keyword id="KW-0968">Cytoplasmic vesicle</keyword>
<keyword id="KW-1015">Disulfide bond</keyword>
<keyword id="KW-0256">Endoplasmic reticulum</keyword>
<keyword id="KW-0407">Ion channel</keyword>
<keyword id="KW-0406">Ion transport</keyword>
<keyword id="KW-1071">Ligand-gated ion channel</keyword>
<keyword id="KW-0472">Membrane</keyword>
<keyword id="KW-0479">Metal-binding</keyword>
<keyword id="KW-0547">Nucleotide-binding</keyword>
<keyword id="KW-0597">Phosphoprotein</keyword>
<keyword id="KW-0675">Receptor</keyword>
<keyword id="KW-1185">Reference proteome</keyword>
<keyword id="KW-0677">Repeat</keyword>
<keyword id="KW-0812">Transmembrane</keyword>
<keyword id="KW-1133">Transmembrane helix</keyword>
<keyword id="KW-0813">Transport</keyword>
<keyword id="KW-0862">Zinc</keyword>
<name>ITPR3_MOUSE</name>
<dbReference type="EMBL" id="AB182289">
    <property type="protein sequence ID" value="BAD90683.1"/>
    <property type="molecule type" value="mRNA"/>
</dbReference>
<dbReference type="EMBL" id="AK028491">
    <property type="protein sequence ID" value="BAC25977.1"/>
    <property type="molecule type" value="mRNA"/>
</dbReference>
<dbReference type="EMBL" id="BC010323">
    <property type="protein sequence ID" value="AAH10323.1"/>
    <property type="molecule type" value="mRNA"/>
</dbReference>
<dbReference type="EMBL" id="M90088">
    <property type="status" value="NOT_ANNOTATED_CDS"/>
    <property type="molecule type" value="mRNA"/>
</dbReference>
<dbReference type="EMBL" id="Z71174">
    <property type="protein sequence ID" value="CAA94862.1"/>
    <property type="molecule type" value="mRNA"/>
</dbReference>
<dbReference type="CCDS" id="CCDS28560.1"/>
<dbReference type="RefSeq" id="NP_542120.2">
    <property type="nucleotide sequence ID" value="NM_080553.3"/>
</dbReference>
<dbReference type="PDB" id="3JRR">
    <property type="method" value="X-ray"/>
    <property type="resolution" value="1.90 A"/>
    <property type="chains" value="A/B=1-224"/>
</dbReference>
<dbReference type="PDBsum" id="3JRR"/>
<dbReference type="SMR" id="P70227"/>
<dbReference type="BioGRID" id="200849">
    <property type="interactions" value="12"/>
</dbReference>
<dbReference type="FunCoup" id="P70227">
    <property type="interactions" value="1011"/>
</dbReference>
<dbReference type="IntAct" id="P70227">
    <property type="interactions" value="2"/>
</dbReference>
<dbReference type="STRING" id="10090.ENSMUSP00000038150"/>
<dbReference type="GlyGen" id="P70227">
    <property type="glycosylation" value="3 sites, 1 N-linked glycan (2 sites), 1 O-linked glycan (1 site)"/>
</dbReference>
<dbReference type="iPTMnet" id="P70227"/>
<dbReference type="PhosphoSitePlus" id="P70227"/>
<dbReference type="jPOST" id="P70227"/>
<dbReference type="PaxDb" id="10090-ENSMUSP00000038150"/>
<dbReference type="PeptideAtlas" id="P70227"/>
<dbReference type="ProteomicsDB" id="269413"/>
<dbReference type="Pumba" id="P70227"/>
<dbReference type="Antibodypedia" id="1294">
    <property type="antibodies" value="158 antibodies from 27 providers"/>
</dbReference>
<dbReference type="DNASU" id="16440"/>
<dbReference type="Ensembl" id="ENSMUST00000049308.9">
    <property type="protein sequence ID" value="ENSMUSP00000038150.9"/>
    <property type="gene ID" value="ENSMUSG00000042644.10"/>
</dbReference>
<dbReference type="GeneID" id="16440"/>
<dbReference type="KEGG" id="mmu:16440"/>
<dbReference type="UCSC" id="uc008bfi.2">
    <property type="organism name" value="mouse"/>
</dbReference>
<dbReference type="AGR" id="MGI:96624"/>
<dbReference type="CTD" id="3710"/>
<dbReference type="MGI" id="MGI:96624">
    <property type="gene designation" value="Itpr3"/>
</dbReference>
<dbReference type="VEuPathDB" id="HostDB:ENSMUSG00000042644"/>
<dbReference type="eggNOG" id="KOG3533">
    <property type="taxonomic scope" value="Eukaryota"/>
</dbReference>
<dbReference type="GeneTree" id="ENSGT00940000157078"/>
<dbReference type="HOGENOM" id="CLU_000206_1_0_1"/>
<dbReference type="InParanoid" id="P70227"/>
<dbReference type="OMA" id="WLMWTDK"/>
<dbReference type="OrthoDB" id="76898at2759"/>
<dbReference type="PhylomeDB" id="P70227"/>
<dbReference type="TreeFam" id="TF312815"/>
<dbReference type="Reactome" id="R-MMU-114508">
    <property type="pathway name" value="Effects of PIP2 hydrolysis"/>
</dbReference>
<dbReference type="Reactome" id="R-MMU-139853">
    <property type="pathway name" value="Elevation of cytosolic Ca2+ levels"/>
</dbReference>
<dbReference type="Reactome" id="R-MMU-381676">
    <property type="pathway name" value="Glucagon-like Peptide-1 (GLP1) regulates insulin secretion"/>
</dbReference>
<dbReference type="Reactome" id="R-MMU-5578775">
    <property type="pathway name" value="Ion homeostasis"/>
</dbReference>
<dbReference type="Reactome" id="R-MMU-9717207">
    <property type="pathway name" value="Sensory perception of sweet, bitter, and umami (glutamate) taste"/>
</dbReference>
<dbReference type="Reactome" id="R-MMU-983695">
    <property type="pathway name" value="Antigen activates B Cell Receptor (BCR) leading to generation of second messengers"/>
</dbReference>
<dbReference type="BioGRID-ORCS" id="16440">
    <property type="hits" value="5 hits in 82 CRISPR screens"/>
</dbReference>
<dbReference type="CD-CODE" id="CE726F99">
    <property type="entry name" value="Postsynaptic density"/>
</dbReference>
<dbReference type="ChiTaRS" id="Itpr3">
    <property type="organism name" value="mouse"/>
</dbReference>
<dbReference type="EvolutionaryTrace" id="P70227"/>
<dbReference type="PRO" id="PR:P70227"/>
<dbReference type="Proteomes" id="UP000000589">
    <property type="component" value="Chromosome 17"/>
</dbReference>
<dbReference type="RNAct" id="P70227">
    <property type="molecule type" value="protein"/>
</dbReference>
<dbReference type="Bgee" id="ENSMUSG00000042644">
    <property type="expression patterns" value="Expressed in molar tooth and 185 other cell types or tissues"/>
</dbReference>
<dbReference type="GO" id="GO:0005737">
    <property type="term" value="C:cytoplasm"/>
    <property type="evidence" value="ECO:0000314"/>
    <property type="project" value="MGI"/>
</dbReference>
<dbReference type="GO" id="GO:0098554">
    <property type="term" value="C:cytoplasmic side of endoplasmic reticulum membrane"/>
    <property type="evidence" value="ECO:0000314"/>
    <property type="project" value="UniProtKB"/>
</dbReference>
<dbReference type="GO" id="GO:0005730">
    <property type="term" value="C:nucleolus"/>
    <property type="evidence" value="ECO:0000314"/>
    <property type="project" value="MGI"/>
</dbReference>
<dbReference type="GO" id="GO:0005654">
    <property type="term" value="C:nucleoplasm"/>
    <property type="evidence" value="ECO:0000314"/>
    <property type="project" value="MGI"/>
</dbReference>
<dbReference type="GO" id="GO:0005634">
    <property type="term" value="C:nucleus"/>
    <property type="evidence" value="ECO:0000314"/>
    <property type="project" value="MGI"/>
</dbReference>
<dbReference type="GO" id="GO:0005886">
    <property type="term" value="C:plasma membrane"/>
    <property type="evidence" value="ECO:0007669"/>
    <property type="project" value="Ensembl"/>
</dbReference>
<dbReference type="GO" id="GO:0043235">
    <property type="term" value="C:receptor complex"/>
    <property type="evidence" value="ECO:0000266"/>
    <property type="project" value="MGI"/>
</dbReference>
<dbReference type="GO" id="GO:0030658">
    <property type="term" value="C:transport vesicle membrane"/>
    <property type="evidence" value="ECO:0007669"/>
    <property type="project" value="UniProtKB-SubCell"/>
</dbReference>
<dbReference type="GO" id="GO:0005524">
    <property type="term" value="F:ATP binding"/>
    <property type="evidence" value="ECO:0000250"/>
    <property type="project" value="UniProtKB"/>
</dbReference>
<dbReference type="GO" id="GO:0005509">
    <property type="term" value="F:calcium ion binding"/>
    <property type="evidence" value="ECO:0000250"/>
    <property type="project" value="UniProtKB"/>
</dbReference>
<dbReference type="GO" id="GO:0070679">
    <property type="term" value="F:inositol 1,4,5 trisphosphate binding"/>
    <property type="evidence" value="ECO:0007669"/>
    <property type="project" value="Ensembl"/>
</dbReference>
<dbReference type="GO" id="GO:0005220">
    <property type="term" value="F:inositol 1,4,5-trisphosphate-gated calcium channel activity"/>
    <property type="evidence" value="ECO:0000314"/>
    <property type="project" value="UniProtKB"/>
</dbReference>
<dbReference type="GO" id="GO:0015278">
    <property type="term" value="F:intracellularly gated calcium channel activity"/>
    <property type="evidence" value="ECO:0000314"/>
    <property type="project" value="UniProtKB"/>
</dbReference>
<dbReference type="GO" id="GO:0035091">
    <property type="term" value="F:phosphatidylinositol binding"/>
    <property type="evidence" value="ECO:0000314"/>
    <property type="project" value="MGI"/>
</dbReference>
<dbReference type="GO" id="GO:0008270">
    <property type="term" value="F:zinc ion binding"/>
    <property type="evidence" value="ECO:0000250"/>
    <property type="project" value="UniProtKB"/>
</dbReference>
<dbReference type="GO" id="GO:0055074">
    <property type="term" value="P:calcium ion homeostasis"/>
    <property type="evidence" value="ECO:0000250"/>
    <property type="project" value="UniProtKB"/>
</dbReference>
<dbReference type="GO" id="GO:0006816">
    <property type="term" value="P:calcium ion transport"/>
    <property type="evidence" value="ECO:0000314"/>
    <property type="project" value="MGI"/>
</dbReference>
<dbReference type="GO" id="GO:0060291">
    <property type="term" value="P:long-term synaptic potentiation"/>
    <property type="evidence" value="ECO:0000315"/>
    <property type="project" value="MGI"/>
</dbReference>
<dbReference type="GO" id="GO:0007613">
    <property type="term" value="P:memory"/>
    <property type="evidence" value="ECO:0000315"/>
    <property type="project" value="MGI"/>
</dbReference>
<dbReference type="GO" id="GO:0030168">
    <property type="term" value="P:platelet activation"/>
    <property type="evidence" value="ECO:0007669"/>
    <property type="project" value="Ensembl"/>
</dbReference>
<dbReference type="GO" id="GO:0051289">
    <property type="term" value="P:protein homotetramerization"/>
    <property type="evidence" value="ECO:0000250"/>
    <property type="project" value="UniProtKB"/>
</dbReference>
<dbReference type="GO" id="GO:0051209">
    <property type="term" value="P:release of sequestered calcium ion into cytosol"/>
    <property type="evidence" value="ECO:0007669"/>
    <property type="project" value="Ensembl"/>
</dbReference>
<dbReference type="GO" id="GO:0051592">
    <property type="term" value="P:response to calcium ion"/>
    <property type="evidence" value="ECO:0007669"/>
    <property type="project" value="Ensembl"/>
</dbReference>
<dbReference type="GO" id="GO:0050913">
    <property type="term" value="P:sensory perception of bitter taste"/>
    <property type="evidence" value="ECO:0000315"/>
    <property type="project" value="MGI"/>
</dbReference>
<dbReference type="GO" id="GO:0050916">
    <property type="term" value="P:sensory perception of sweet taste"/>
    <property type="evidence" value="ECO:0000315"/>
    <property type="project" value="MGI"/>
</dbReference>
<dbReference type="GO" id="GO:0050917">
    <property type="term" value="P:sensory perception of umami taste"/>
    <property type="evidence" value="ECO:0000315"/>
    <property type="project" value="MGI"/>
</dbReference>
<dbReference type="CDD" id="cd23289">
    <property type="entry name" value="beta-trefoil_MIR_ITPR3"/>
    <property type="match status" value="1"/>
</dbReference>
<dbReference type="FunFam" id="2.80.10.50:FF:000002">
    <property type="entry name" value="Inositol 1,4,5-trisphosphate receptor type 2"/>
    <property type="match status" value="1"/>
</dbReference>
<dbReference type="FunFam" id="2.80.10.50:FF:000028">
    <property type="entry name" value="Inositol 1,4,5-trisphosphate receptor type 3"/>
    <property type="match status" value="1"/>
</dbReference>
<dbReference type="FunFam" id="1.25.10.30:FF:000001">
    <property type="entry name" value="Inositol 1,4,5-trisphosphate receptor, type 2"/>
    <property type="match status" value="1"/>
</dbReference>
<dbReference type="Gene3D" id="1.10.287.70">
    <property type="match status" value="1"/>
</dbReference>
<dbReference type="Gene3D" id="2.80.10.50">
    <property type="match status" value="2"/>
</dbReference>
<dbReference type="Gene3D" id="1.25.10.30">
    <property type="entry name" value="IP3 receptor type 1 binding core, RIH domain"/>
    <property type="match status" value="1"/>
</dbReference>
<dbReference type="InterPro" id="IPR014821">
    <property type="entry name" value="Ins145_P3_rcpt"/>
</dbReference>
<dbReference type="InterPro" id="IPR000493">
    <property type="entry name" value="InsP3_rcpt"/>
</dbReference>
<dbReference type="InterPro" id="IPR005821">
    <property type="entry name" value="Ion_trans_dom"/>
</dbReference>
<dbReference type="InterPro" id="IPR036300">
    <property type="entry name" value="MIR_dom_sf"/>
</dbReference>
<dbReference type="InterPro" id="IPR016093">
    <property type="entry name" value="MIR_motif"/>
</dbReference>
<dbReference type="InterPro" id="IPR013662">
    <property type="entry name" value="RIH_assoc-dom"/>
</dbReference>
<dbReference type="InterPro" id="IPR000699">
    <property type="entry name" value="RIH_dom"/>
</dbReference>
<dbReference type="InterPro" id="IPR015925">
    <property type="entry name" value="Ryanodine_IP3_receptor"/>
</dbReference>
<dbReference type="InterPro" id="IPR035910">
    <property type="entry name" value="RyR/IP3R_RIH_dom_sf"/>
</dbReference>
<dbReference type="PANTHER" id="PTHR45816:SF1">
    <property type="entry name" value="INOSITOL 1,4,5-TRISPHOSPHATE RECEPTOR"/>
    <property type="match status" value="1"/>
</dbReference>
<dbReference type="PANTHER" id="PTHR45816">
    <property type="entry name" value="MIR DOMAIN-CONTAINING PROTEIN"/>
    <property type="match status" value="1"/>
</dbReference>
<dbReference type="Pfam" id="PF08709">
    <property type="entry name" value="Ins145_P3_rec"/>
    <property type="match status" value="1"/>
</dbReference>
<dbReference type="Pfam" id="PF00520">
    <property type="entry name" value="Ion_trans"/>
    <property type="match status" value="1"/>
</dbReference>
<dbReference type="Pfam" id="PF02815">
    <property type="entry name" value="MIR"/>
    <property type="match status" value="1"/>
</dbReference>
<dbReference type="Pfam" id="PF08454">
    <property type="entry name" value="RIH_assoc"/>
    <property type="match status" value="1"/>
</dbReference>
<dbReference type="Pfam" id="PF01365">
    <property type="entry name" value="RYDR_ITPR"/>
    <property type="match status" value="2"/>
</dbReference>
<dbReference type="PRINTS" id="PR00779">
    <property type="entry name" value="INSP3RECEPTR"/>
</dbReference>
<dbReference type="SMART" id="SM00472">
    <property type="entry name" value="MIR"/>
    <property type="match status" value="4"/>
</dbReference>
<dbReference type="SUPFAM" id="SSF100909">
    <property type="entry name" value="IP3 receptor type 1 binding core, domain 2"/>
    <property type="match status" value="2"/>
</dbReference>
<dbReference type="SUPFAM" id="SSF82109">
    <property type="entry name" value="MIR domain"/>
    <property type="match status" value="2"/>
</dbReference>
<dbReference type="PROSITE" id="PS50919">
    <property type="entry name" value="MIR"/>
    <property type="match status" value="5"/>
</dbReference>
<proteinExistence type="evidence at protein level"/>
<reference key="1">
    <citation type="journal article" date="2005" name="J. Biol. Chem.">
        <title>Molecular cloning of mouse type 2 and type 3 inositol 1,4,5-trisphosphate receptors and identification of a novel type 2 receptor splice variant.</title>
        <authorList>
            <person name="Iwai M."/>
            <person name="Tateishi Y."/>
            <person name="Hattori M."/>
            <person name="Mizutani A."/>
            <person name="Nakamura T."/>
            <person name="Futatsugi A."/>
            <person name="Inoue T."/>
            <person name="Furuichi T."/>
            <person name="Michikawa T."/>
            <person name="Mikoshiba K."/>
        </authorList>
    </citation>
    <scope>NUCLEOTIDE SEQUENCE [MRNA]</scope>
    <scope>FUNCTION</scope>
    <scope>SUBCELLULAR LOCATION</scope>
    <scope>MUTAGENESIS OF LYS-507 AND ARG-510</scope>
    <source>
        <strain>C57BL/6J</strain>
        <tissue>Lung</tissue>
    </source>
</reference>
<reference key="2">
    <citation type="journal article" date="2005" name="Science">
        <title>The transcriptional landscape of the mammalian genome.</title>
        <authorList>
            <person name="Carninci P."/>
            <person name="Kasukawa T."/>
            <person name="Katayama S."/>
            <person name="Gough J."/>
            <person name="Frith M.C."/>
            <person name="Maeda N."/>
            <person name="Oyama R."/>
            <person name="Ravasi T."/>
            <person name="Lenhard B."/>
            <person name="Wells C."/>
            <person name="Kodzius R."/>
            <person name="Shimokawa K."/>
            <person name="Bajic V.B."/>
            <person name="Brenner S.E."/>
            <person name="Batalov S."/>
            <person name="Forrest A.R."/>
            <person name="Zavolan M."/>
            <person name="Davis M.J."/>
            <person name="Wilming L.G."/>
            <person name="Aidinis V."/>
            <person name="Allen J.E."/>
            <person name="Ambesi-Impiombato A."/>
            <person name="Apweiler R."/>
            <person name="Aturaliya R.N."/>
            <person name="Bailey T.L."/>
            <person name="Bansal M."/>
            <person name="Baxter L."/>
            <person name="Beisel K.W."/>
            <person name="Bersano T."/>
            <person name="Bono H."/>
            <person name="Chalk A.M."/>
            <person name="Chiu K.P."/>
            <person name="Choudhary V."/>
            <person name="Christoffels A."/>
            <person name="Clutterbuck D.R."/>
            <person name="Crowe M.L."/>
            <person name="Dalla E."/>
            <person name="Dalrymple B.P."/>
            <person name="de Bono B."/>
            <person name="Della Gatta G."/>
            <person name="di Bernardo D."/>
            <person name="Down T."/>
            <person name="Engstrom P."/>
            <person name="Fagiolini M."/>
            <person name="Faulkner G."/>
            <person name="Fletcher C.F."/>
            <person name="Fukushima T."/>
            <person name="Furuno M."/>
            <person name="Futaki S."/>
            <person name="Gariboldi M."/>
            <person name="Georgii-Hemming P."/>
            <person name="Gingeras T.R."/>
            <person name="Gojobori T."/>
            <person name="Green R.E."/>
            <person name="Gustincich S."/>
            <person name="Harbers M."/>
            <person name="Hayashi Y."/>
            <person name="Hensch T.K."/>
            <person name="Hirokawa N."/>
            <person name="Hill D."/>
            <person name="Huminiecki L."/>
            <person name="Iacono M."/>
            <person name="Ikeo K."/>
            <person name="Iwama A."/>
            <person name="Ishikawa T."/>
            <person name="Jakt M."/>
            <person name="Kanapin A."/>
            <person name="Katoh M."/>
            <person name="Kawasawa Y."/>
            <person name="Kelso J."/>
            <person name="Kitamura H."/>
            <person name="Kitano H."/>
            <person name="Kollias G."/>
            <person name="Krishnan S.P."/>
            <person name="Kruger A."/>
            <person name="Kummerfeld S.K."/>
            <person name="Kurochkin I.V."/>
            <person name="Lareau L.F."/>
            <person name="Lazarevic D."/>
            <person name="Lipovich L."/>
            <person name="Liu J."/>
            <person name="Liuni S."/>
            <person name="McWilliam S."/>
            <person name="Madan Babu M."/>
            <person name="Madera M."/>
            <person name="Marchionni L."/>
            <person name="Matsuda H."/>
            <person name="Matsuzawa S."/>
            <person name="Miki H."/>
            <person name="Mignone F."/>
            <person name="Miyake S."/>
            <person name="Morris K."/>
            <person name="Mottagui-Tabar S."/>
            <person name="Mulder N."/>
            <person name="Nakano N."/>
            <person name="Nakauchi H."/>
            <person name="Ng P."/>
            <person name="Nilsson R."/>
            <person name="Nishiguchi S."/>
            <person name="Nishikawa S."/>
            <person name="Nori F."/>
            <person name="Ohara O."/>
            <person name="Okazaki Y."/>
            <person name="Orlando V."/>
            <person name="Pang K.C."/>
            <person name="Pavan W.J."/>
            <person name="Pavesi G."/>
            <person name="Pesole G."/>
            <person name="Petrovsky N."/>
            <person name="Piazza S."/>
            <person name="Reed J."/>
            <person name="Reid J.F."/>
            <person name="Ring B.Z."/>
            <person name="Ringwald M."/>
            <person name="Rost B."/>
            <person name="Ruan Y."/>
            <person name="Salzberg S.L."/>
            <person name="Sandelin A."/>
            <person name="Schneider C."/>
            <person name="Schoenbach C."/>
            <person name="Sekiguchi K."/>
            <person name="Semple C.A."/>
            <person name="Seno S."/>
            <person name="Sessa L."/>
            <person name="Sheng Y."/>
            <person name="Shibata Y."/>
            <person name="Shimada H."/>
            <person name="Shimada K."/>
            <person name="Silva D."/>
            <person name="Sinclair B."/>
            <person name="Sperling S."/>
            <person name="Stupka E."/>
            <person name="Sugiura K."/>
            <person name="Sultana R."/>
            <person name="Takenaka Y."/>
            <person name="Taki K."/>
            <person name="Tammoja K."/>
            <person name="Tan S.L."/>
            <person name="Tang S."/>
            <person name="Taylor M.S."/>
            <person name="Tegner J."/>
            <person name="Teichmann S.A."/>
            <person name="Ueda H.R."/>
            <person name="van Nimwegen E."/>
            <person name="Verardo R."/>
            <person name="Wei C.L."/>
            <person name="Yagi K."/>
            <person name="Yamanishi H."/>
            <person name="Zabarovsky E."/>
            <person name="Zhu S."/>
            <person name="Zimmer A."/>
            <person name="Hide W."/>
            <person name="Bult C."/>
            <person name="Grimmond S.M."/>
            <person name="Teasdale R.D."/>
            <person name="Liu E.T."/>
            <person name="Brusic V."/>
            <person name="Quackenbush J."/>
            <person name="Wahlestedt C."/>
            <person name="Mattick J.S."/>
            <person name="Hume D.A."/>
            <person name="Kai C."/>
            <person name="Sasaki D."/>
            <person name="Tomaru Y."/>
            <person name="Fukuda S."/>
            <person name="Kanamori-Katayama M."/>
            <person name="Suzuki M."/>
            <person name="Aoki J."/>
            <person name="Arakawa T."/>
            <person name="Iida J."/>
            <person name="Imamura K."/>
            <person name="Itoh M."/>
            <person name="Kato T."/>
            <person name="Kawaji H."/>
            <person name="Kawagashira N."/>
            <person name="Kawashima T."/>
            <person name="Kojima M."/>
            <person name="Kondo S."/>
            <person name="Konno H."/>
            <person name="Nakano K."/>
            <person name="Ninomiya N."/>
            <person name="Nishio T."/>
            <person name="Okada M."/>
            <person name="Plessy C."/>
            <person name="Shibata K."/>
            <person name="Shiraki T."/>
            <person name="Suzuki S."/>
            <person name="Tagami M."/>
            <person name="Waki K."/>
            <person name="Watahiki A."/>
            <person name="Okamura-Oho Y."/>
            <person name="Suzuki H."/>
            <person name="Kawai J."/>
            <person name="Hayashizaki Y."/>
        </authorList>
    </citation>
    <scope>NUCLEOTIDE SEQUENCE [LARGE SCALE MRNA] OF 1857-2670</scope>
    <source>
        <strain>C57BL/6J</strain>
        <tissue>Skin</tissue>
    </source>
</reference>
<reference key="3">
    <citation type="journal article" date="2004" name="Genome Res.">
        <title>The status, quality, and expansion of the NIH full-length cDNA project: the Mammalian Gene Collection (MGC).</title>
        <authorList>
            <consortium name="The MGC Project Team"/>
        </authorList>
    </citation>
    <scope>NUCLEOTIDE SEQUENCE [LARGE SCALE MRNA] OF 2181-2670</scope>
    <source>
        <strain>FVB/N</strain>
        <tissue>Mammary tumor</tissue>
    </source>
</reference>
<reference key="4">
    <citation type="journal article" date="1992" name="Proc. Natl. Acad. Sci. U.S.A.">
        <title>Three additional inositol 1,4,5-trisphosphate receptors: molecular cloning and differential localization in brain and peripheral tissues.</title>
        <authorList>
            <person name="Ross C.A."/>
            <person name="Danoff S.K."/>
            <person name="Schell M.J."/>
            <person name="Snyder S.H."/>
            <person name="Ullrich A."/>
        </authorList>
    </citation>
    <scope>NUCLEOTIDE SEQUENCE [MRNA] OF 2406-2609</scope>
    <source>
        <tissue>Placenta</tissue>
    </source>
</reference>
<reference key="5">
    <citation type="journal article" date="1997" name="Biochem. J.">
        <title>Isoform diversity of the inositol trisphosphate receptor in cell types of mouse origin.</title>
        <authorList>
            <person name="De Smedt H."/>
            <person name="Missiaen L."/>
            <person name="Parys J.B."/>
            <person name="Henning R.H."/>
            <person name="Sienaert I."/>
            <person name="Vanlingen S."/>
            <person name="Gijsens A."/>
            <person name="Himpens B."/>
            <person name="Casteels R."/>
        </authorList>
    </citation>
    <scope>NUCLEOTIDE SEQUENCE [MRNA] OF 2433-2629</scope>
    <scope>FUNCTION</scope>
    <source>
        <strain>C3H/HeJ</strain>
        <tissue>Embryo</tissue>
    </source>
</reference>
<reference key="6">
    <citation type="journal article" date="2001" name="Proc. Natl. Acad. Sci. U.S.A.">
        <title>Regulating ankyrin dynamics: roles of sigma-1 receptors.</title>
        <authorList>
            <person name="Hayashi T."/>
            <person name="Su T.-P."/>
        </authorList>
    </citation>
    <scope>INTERACTION WITH SIGMAR1</scope>
</reference>
<reference key="7">
    <citation type="journal article" date="2007" name="Proc. Natl. Acad. Sci. U.S.A.">
        <title>Large-scale phosphorylation analysis of mouse liver.</title>
        <authorList>
            <person name="Villen J."/>
            <person name="Beausoleil S.A."/>
            <person name="Gerber S.A."/>
            <person name="Gygi S.P."/>
        </authorList>
    </citation>
    <scope>PHOSPHORYLATION [LARGE SCALE ANALYSIS] AT SER-916</scope>
    <scope>IDENTIFICATION BY MASS SPECTROMETRY [LARGE SCALE ANALYSIS]</scope>
    <source>
        <tissue>Liver</tissue>
    </source>
</reference>
<reference key="8">
    <citation type="journal article" date="2010" name="Cell">
        <title>A tissue-specific atlas of mouse protein phosphorylation and expression.</title>
        <authorList>
            <person name="Huttlin E.L."/>
            <person name="Jedrychowski M.P."/>
            <person name="Elias J.E."/>
            <person name="Goswami T."/>
            <person name="Rad R."/>
            <person name="Beausoleil S.A."/>
            <person name="Villen J."/>
            <person name="Haas W."/>
            <person name="Sowa M.E."/>
            <person name="Gygi S.P."/>
        </authorList>
    </citation>
    <scope>PHOSPHORYLATION [LARGE SCALE ANALYSIS] AT SER-916; SER-934; SER-1832 AND SER-2669</scope>
    <scope>IDENTIFICATION BY MASS SPECTROMETRY [LARGE SCALE ANALYSIS]</scope>
    <source>
        <tissue>Brain</tissue>
        <tissue>Brown adipose tissue</tissue>
        <tissue>Heart</tissue>
        <tissue>Kidney</tissue>
        <tissue>Liver</tissue>
        <tissue>Lung</tissue>
        <tissue>Pancreas</tissue>
        <tissue>Spleen</tissue>
        <tissue>Testis</tissue>
    </source>
</reference>
<reference key="9">
    <citation type="journal article" date="2010" name="Chem. Senses">
        <title>Lrmp/Jaw1 is expressed in sweet, bitter, and umami receptor-expressing cells.</title>
        <authorList>
            <person name="Shindo Y."/>
            <person name="Kim M.R."/>
            <person name="Miura H."/>
            <person name="Yuuki T."/>
            <person name="Kanda T."/>
            <person name="Hino A."/>
            <person name="Kusakabe Y."/>
        </authorList>
    </citation>
    <scope>INTERACTION WITH IRAG2</scope>
</reference>
<reference key="10">
    <citation type="journal article" date="2010" name="J. Biol. Chem.">
        <title>Tyr-167/Trp-168 in type 1/3 inositol 1,4,5-trisphosphate receptor mediates functional coupling between ligand binding and channel opening.</title>
        <authorList>
            <person name="Yamazaki H."/>
            <person name="Chan J."/>
            <person name="Ikura M."/>
            <person name="Michikawa T."/>
            <person name="Mikoshiba K."/>
        </authorList>
    </citation>
    <scope>FUNCTION</scope>
    <scope>TRANSPORTER ACTIVITY</scope>
    <scope>MUTAGENESIS OF TRP-168</scope>
</reference>
<reference key="11">
    <citation type="journal article" date="2010" name="Science">
        <title>PML regulates apoptosis at endoplasmic reticulum by modulating calcium release.</title>
        <authorList>
            <person name="Giorgi C."/>
            <person name="Ito K."/>
            <person name="Lin H.K."/>
            <person name="Santangelo C."/>
            <person name="Wieckowski M.R."/>
            <person name="Lebiedzinska M."/>
            <person name="Bononi A."/>
            <person name="Bonora M."/>
            <person name="Duszynski J."/>
            <person name="Bernardi R."/>
            <person name="Rizzuto R."/>
            <person name="Tacchetti C."/>
            <person name="Pinton P."/>
            <person name="Pandolfi P.P."/>
        </authorList>
    </citation>
    <scope>INTERACTION WITH PML AND AKT1</scope>
    <scope>PHOSPHORYLATION</scope>
    <scope>SUBCELLULAR LOCATION</scope>
</reference>
<reference key="12">
    <citation type="journal article" date="2012" name="FEBS Open Bio">
        <title>Tespa1 is a novel inositol 1,4,5-trisphosphate receptor binding protein in T and B lymphocytes.</title>
        <authorList>
            <person name="Matsuzaki H."/>
            <person name="Fujimoto T."/>
            <person name="Ota T."/>
            <person name="Ogawa M."/>
            <person name="Tsunoda T."/>
            <person name="Doi K."/>
            <person name="Hamabashiri M."/>
            <person name="Tanaka M."/>
            <person name="Shirasawa S."/>
        </authorList>
    </citation>
    <scope>INTERACTION WITH TESPA1</scope>
</reference>
<reference evidence="18" key="13">
    <citation type="journal article" date="2010" name="J. Biol. Chem.">
        <title>Structural studies of inositol 1,4,5-trisphosphate receptor: coupling ligand binding to channel gating.</title>
        <authorList>
            <person name="Chan J."/>
            <person name="Yamazaki H."/>
            <person name="Ishiyama N."/>
            <person name="Seo M.D."/>
            <person name="Mal T.K."/>
            <person name="Michikawa T."/>
            <person name="Mikoshiba K."/>
            <person name="Ikura M."/>
        </authorList>
    </citation>
    <scope>X-RAY CRYSTALLOGRAPHY (1.9 ANGSTROMS) OF 1-224</scope>
    <scope>SUBUNIT</scope>
</reference>
<sequence>MNEMSSFLHIGDIVSLYAEGSVNGFISTLGLVDDRCVVEPAAGDLDNPPKKFRDCLFKVCPMNRYSAQKQYWKAKQTKQDKEKIADVVLLQKLQHAAQMEQKQNDTENKKVHGDVVKYGSVIQLLHMKSNKYLTVNKRLPALLEKNAMRVTLDATGNEGSWLFIQPFWKLRSNGDNVVVGDKVILNPVNAGQPLHASNYELSDNAGCKEVNSVNCNTSWKINLFMQFRDHLEEVLKGGDVVRLFHAEQEKFLTCDEYRGKLQVFLRTTLRQSATSATSSNALWEVEVVHHDPCRGGAGHWNGLYRFKHLATGNYLAAEENPSYKGDVSDPKAAGLGAQGRTGRRNAGEKIKYRLVAVPHGNDIASLFELDPTTLQKTDSFVPRNSYVRLRHLCTNTWIQSTNAPIDVEEERPIRLMLGTCPTKEDKEAFAIVSVPVSEIRDLDFANDASSMLASAVEKLNEGFISQNDRRFVIQLLEDLVFFVSDVPNNGQNVLDIMVTKPNRERQKLMREQNILKQIFGILKAPFRDKGGEGPLVRLEELSDQKNAPYQYMFRLCYRVLRHSQEDYRKNQEHIAKQFGMMQSQIGYDILAEDTITALLHNNRKLLEKHITKTEVETFVSLVRKNREPRFLDYLSDLCVSNRIAIPVTQELICKCVLDPKNSDILIQTELRPVKEMAQSHEYLSIEYSEEEVWLTWTDRNNEHHEKSVRQLAQEARAGNAHDENVLSYYRYQLKLFARMCLDRQYLAIDEISKQLGVELLFLCMADEMLPFDLRASFCHLMLHVHVDRDPQELVTPVKFARLWTEIPTAITIKDYDSNLNASRDDKKNKFASTMEFVEDYLNNVVSEAVPFANDEKNILTFEVVSLAHNLIYFGFYSFSELLRLTRTLLGIIDCIQAPAAMLQAYEEPGGKNVRRSIQGVGHMMSTMVLSRKQSVFGASSLPAGVGVPEQLDRSKFEDNEHTVVMETKLKILEILQFILNVRLDYRISYLLSVFKKEFVEVFPMQDSGADGTAPAFDSSTATMNLDRIGEQAEAMFGVGKTSSMLEVDDEGGRMFLRVLLHLTMHDYPSLVSGALQLLFKHFSQRQEAMHTFKQVQLLISAQDVENYKVIKSELDRLRTMVEKSELWVDKKGSVKGEEVEAGATKDKKERPSDEEGFLQPHGEKSSENYQIVKGILERLNKMCGVGEQMRKKQQRLLKNMDAHKVMLDLLQIPYDKSDNKMLEILRYTHQFLQKFCAGNPGNQALLHKHLQLFLTPGLLEAETMQHIFLNNYQLCSEISEPVLQHFVHLLATHGRHVQYLDFLHTVIKAEGKYVKKCQDMIMTELTNAGDDVVVFYNDKASLAHLLDMMKAARDGVEDHSPLMYHISLVDLLAACAEGKNVYTEIKCTSLLPLEDVVTVVTHEDCITEVKMAYVNFVNHCYVDTEVEMKEIYTSNHIWTLFENFTLDMALVCNKREKRLSDPTLEKYVLTVVLDTISAFFSSPFSENSTSLQTHQTIVVQLLQSTTRLLECPWLQQQHKGSVEACVRTLAMVAKSRAILLPMDLDAHMSALLSSGGSCSAAAQRSAANYKTATRTFPRVIPTANQWDYKNIIEKLQDIIMALEERLKPLVQAELSVLVDMLHWPELLFPEGSEAYQRCESGGFLSKLIRHTKGLMESEEKLCVKVLRTLQQMLLKKSKFGDRGNQLRKMLLQNYLQNRKSGARGELTDPTGSGLDQDWSAIAATQCRLDKEGATKLVCDLITSTKNEKIFQESIGLAIRLLDGGNTEIQKSFYNLMTSDKKSERFFKVLHDRMKRAQQETKSTVAVNMSDLGSQPREDREPADPATKGRVSSFSMPSSSRYLLGLGLHRGHDMSERAQNNEMGTSVLIMRPILRFLQLLCENHNRDLQNFLRCQNNKTNYNLVCETLQFLDIMCGSTTGGLGLLGLYINEDNVGLVIQTLETLTEYCQGPCHENQTCIVTHESNGIDIITALILNDISPLCKYRMDLVLQLKDNASKLLLALMESRHDSENAERILISLRPQELVDVIKKAYLQEEERENSEVSPREVGHNIYILALQLSRHNKQLQHLLKPVRRIQEEEAEGISSMLSLNNKQLSQMLKSSAPAQEEEEDPLAYYENHTSQIEIVRQDRSMEQIVFPVPAICQFLTEETKHRLFTTTEQDEQGSKVSDFFDQSSFLHNEMEWQRRLRSMPLIYWFSRRMTLWGSISFNLAVFINIIIAFFYPYVEGASTGVLGSPLISLLFWILICFSIAALFTKRYSVRPLIVALILRSIYYLGIGPTLNILGALNLTNKIVFVVSFVGNRGTFIRGYKAMVMDMEFLYHVGYILTSVLGLFAHELFYSILLFDLIYREETLFNVIKSVTRNGRSILLTALLALILVYLFSIVGFLFLKDDFILEVDRLPGNHSRASPLGMPHGAATFMGTCSGDKMDCVSEVSVPEILEEDEEPDSTERACDTLLMCIVTVMNHGLRNGGGVGDILRKPSKDESLFPARVVYDLLFFFIVIIIVLNLIFGVIIDTFADLRSEKQKKEEILKTTCFICGLERDKFDNKTVSFEEHIKLEHNMWNYLYFIVLVRVKNKTDYTGPESYVAQMIKNKNLDWFPRMRAMSLVSGEGEGEQNEIRILQEKLGSTMKLVSHLTSQLNELKEQMTEQRKRRQRLGFVDVQNCMSR</sequence>
<organism>
    <name type="scientific">Mus musculus</name>
    <name type="common">Mouse</name>
    <dbReference type="NCBI Taxonomy" id="10090"/>
    <lineage>
        <taxon>Eukaryota</taxon>
        <taxon>Metazoa</taxon>
        <taxon>Chordata</taxon>
        <taxon>Craniata</taxon>
        <taxon>Vertebrata</taxon>
        <taxon>Euteleostomi</taxon>
        <taxon>Mammalia</taxon>
        <taxon>Eutheria</taxon>
        <taxon>Euarchontoglires</taxon>
        <taxon>Glires</taxon>
        <taxon>Rodentia</taxon>
        <taxon>Myomorpha</taxon>
        <taxon>Muroidea</taxon>
        <taxon>Muridae</taxon>
        <taxon>Murinae</taxon>
        <taxon>Mus</taxon>
        <taxon>Mus</taxon>
    </lineage>
</organism>
<evidence type="ECO:0000250" key="1">
    <source>
        <dbReference type="UniProtKB" id="Q14573"/>
    </source>
</evidence>
<evidence type="ECO:0000250" key="2">
    <source>
        <dbReference type="UniProtKB" id="Q63269"/>
    </source>
</evidence>
<evidence type="ECO:0000250" key="3">
    <source>
        <dbReference type="UniProtKB" id="Q8WN95"/>
    </source>
</evidence>
<evidence type="ECO:0000255" key="4"/>
<evidence type="ECO:0000255" key="5">
    <source>
        <dbReference type="PROSITE-ProRule" id="PRU00131"/>
    </source>
</evidence>
<evidence type="ECO:0000256" key="6">
    <source>
        <dbReference type="SAM" id="MobiDB-lite"/>
    </source>
</evidence>
<evidence type="ECO:0000269" key="7">
    <source>
    </source>
</evidence>
<evidence type="ECO:0000269" key="8">
    <source>
    </source>
</evidence>
<evidence type="ECO:0000269" key="9">
    <source>
    </source>
</evidence>
<evidence type="ECO:0000269" key="10">
    <source>
    </source>
</evidence>
<evidence type="ECO:0000269" key="11">
    <source>
    </source>
</evidence>
<evidence type="ECO:0000269" key="12">
    <source>
    </source>
</evidence>
<evidence type="ECO:0000269" key="13">
    <source>
    </source>
</evidence>
<evidence type="ECO:0000269" key="14">
    <source>
    </source>
</evidence>
<evidence type="ECO:0000303" key="15">
    <source>
    </source>
</evidence>
<evidence type="ECO:0000305" key="16"/>
<evidence type="ECO:0000312" key="17">
    <source>
        <dbReference type="MGI" id="MGI:96624"/>
    </source>
</evidence>
<evidence type="ECO:0007744" key="18">
    <source>
        <dbReference type="PDB" id="3JRR"/>
    </source>
</evidence>
<evidence type="ECO:0007744" key="19">
    <source>
    </source>
</evidence>
<evidence type="ECO:0007744" key="20">
    <source>
    </source>
</evidence>
<evidence type="ECO:0007829" key="21">
    <source>
        <dbReference type="PDB" id="3JRR"/>
    </source>
</evidence>
<comment type="function">
    <text evidence="1 8 10 14">Inositol 1,4,5-trisphosphate-gated calcium channel that, upon 1D-myo-inositol 1,4,5-trisphosphate binding, transports calcium from the endoplasmic reticulum lumen to cytoplasm, thus releasing the intracellular calcium and therefore participates in cellular calcium ion homeostasis (PubMed:15632133, PubMed:20813840, PubMed:9065779). 1D-myo-inositol 1,4,5-trisphosphate binds to the ligand-free channel without altering its global conformation, yielding the low-energy resting state, then progresses through resting-to preactivated transitions to the higher energy preactivated state, which increases affinity for calcium, promoting binding of the low basal cytosolic calcium at the juxtamembrane domain (JD) site, favoring the transition through the ensemble of high-energy intermediate states along the trajectory to the fully-open activated state (By similarity). Upon opening, releases calcium in the cytosol where it can bind to the low-affinity cytoplasmic domain (CD) site and stabilizes the inhibited state to terminate calcium release (By similarity).</text>
</comment>
<comment type="catalytic activity">
    <reaction evidence="10 14">
        <text>Ca(2+)(in) = Ca(2+)(out)</text>
        <dbReference type="Rhea" id="RHEA:29671"/>
        <dbReference type="ChEBI" id="CHEBI:29108"/>
    </reaction>
</comment>
<comment type="activity regulation">
    <text evidence="1">Inositol 1,4,5-trisphosphate-gated calcium channel is regulated by cytosolic calcium in a biphasic manner. At low concentrations, cytosolic calcium binds at a high-affinity juxtamembrane domain (JD) calcium binding site, allowing ITPR3 to activate by escaping a low-energy resting state through an ensemble of preactivated states. At high cytosolic calcium concentrations, ITPR3 preferentially enters an inhibited state stabilized by calcium binding at a second, low-affinity cytoplasmic domain (CD) calcium binding site.</text>
</comment>
<comment type="subunit">
    <text evidence="1 2 3 7 9 11 12 13">Homodimer (PubMed:20843799). Homotetramer. Interacts with TRPC1, TRPC3, TRPC4. Interacts with TRPV4 (By similarity). Interacts with SIGMAR1 (PubMed:11149946). Found in a complex with AKT1 and PML; this interaction modulates IP3R3-phosphorylation and in turn ITPR3-dependent calcium release (PubMed:21030605). Interacts with IRAG2 (via coiled-coil domain) (PubMed:20071408). Interacts with CABP1 (By similarity). Interacts with TMBIM4/LFG4 (By similarity). Interacts with CEMIP (By similarity). Interacts with TESPA1 (PubMed:23650607). Interacts with TMEM203 (By similarity). Interacts with BOK; regulates ITPR3 expression (By similarity). Interacts with BCL2L10 (By similarity). Interacts with CHGA and CHGB (By similarity).</text>
</comment>
<comment type="subcellular location">
    <subcellularLocation>
        <location evidence="8 12">Endoplasmic reticulum membrane</location>
        <topology evidence="4">Multi-pass membrane protein</topology>
    </subcellularLocation>
    <subcellularLocation>
        <location evidence="3">Cytoplasmic vesicle</location>
        <location evidence="3">Secretory vesicle membrane</location>
        <topology evidence="4">Multi-pass membrane protein</topology>
    </subcellularLocation>
    <text evidence="12">Also localizes at mitochondria-associated membranes (MAMs).</text>
</comment>
<comment type="domain">
    <text evidence="1">Composed of a large N-terminal cytoplasmic domain (CD) followed by a juxtamembrane domain (JD) and a transmembrane domain (TMD).</text>
</comment>
<comment type="PTM">
    <text evidence="12">Phosphorylated by AKT1 on serine and/or threonine residues.</text>
</comment>
<comment type="similarity">
    <text evidence="16">Belongs to the InsP3 receptor family.</text>
</comment>
<protein>
    <recommendedName>
        <fullName evidence="16">Inositol 1,4,5-trisphosphate-gated calcium channel ITPR3</fullName>
    </recommendedName>
    <alternativeName>
        <fullName>IP3 receptor isoform 3</fullName>
        <shortName evidence="2">IP3R-3</shortName>
        <shortName>InsP3R3</shortName>
    </alternativeName>
    <alternativeName>
        <fullName>Inositol 1,4,5-trisphosphate receptor type 3</fullName>
    </alternativeName>
    <alternativeName>
        <fullName evidence="15">Type 3 inositol 1,4,5-trisphosphate receptor</fullName>
        <shortName>Type 3 InsP3 receptor</shortName>
    </alternativeName>
</protein>
<gene>
    <name evidence="17" type="primary">Itpr3</name>
</gene>
<feature type="chain" id="PRO_0000153929" description="Inositol 1,4,5-trisphosphate-gated calcium channel ITPR3">
    <location>
        <begin position="1"/>
        <end position="2670"/>
    </location>
</feature>
<feature type="topological domain" description="Cytoplasmic" evidence="4">
    <location>
        <begin position="1"/>
        <end position="2233"/>
    </location>
</feature>
<feature type="transmembrane region" description="Helical" evidence="4">
    <location>
        <begin position="2234"/>
        <end position="2254"/>
    </location>
</feature>
<feature type="topological domain" description="Extracellular" evidence="4">
    <location>
        <begin position="2255"/>
        <end position="2262"/>
    </location>
</feature>
<feature type="transmembrane region" description="Helical" evidence="4">
    <location>
        <begin position="2263"/>
        <end position="2283"/>
    </location>
</feature>
<feature type="topological domain" description="Cytoplasmic" evidence="4">
    <location>
        <begin position="2284"/>
        <end position="2292"/>
    </location>
</feature>
<feature type="transmembrane region" description="Helical" evidence="4">
    <location>
        <begin position="2293"/>
        <end position="2310"/>
    </location>
</feature>
<feature type="topological domain" description="Extracellular" evidence="4">
    <location>
        <begin position="2311"/>
        <end position="2324"/>
    </location>
</feature>
<feature type="transmembrane region" description="Helical" evidence="4">
    <location>
        <begin position="2325"/>
        <end position="2345"/>
    </location>
</feature>
<feature type="topological domain" description="Cytoplasmic" evidence="4">
    <location>
        <begin position="2346"/>
        <end position="2367"/>
    </location>
</feature>
<feature type="transmembrane region" description="Helical" evidence="4">
    <location>
        <begin position="2368"/>
        <end position="2388"/>
    </location>
</feature>
<feature type="topological domain" description="Extracellular" evidence="4">
    <location>
        <begin position="2389"/>
        <end position="2495"/>
    </location>
</feature>
<feature type="transmembrane region" description="Helical" evidence="4">
    <location>
        <begin position="2496"/>
        <end position="2516"/>
    </location>
</feature>
<feature type="topological domain" description="Cytoplasmic" evidence="4">
    <location>
        <begin position="2517"/>
        <end position="2670"/>
    </location>
</feature>
<feature type="domain" description="MIR 1" evidence="5">
    <location>
        <begin position="113"/>
        <end position="173"/>
    </location>
</feature>
<feature type="domain" description="MIR 2" evidence="5">
    <location>
        <begin position="174"/>
        <end position="224"/>
    </location>
</feature>
<feature type="domain" description="MIR 3" evidence="5">
    <location>
        <begin position="232"/>
        <end position="288"/>
    </location>
</feature>
<feature type="domain" description="MIR 4" evidence="5">
    <location>
        <begin position="295"/>
        <end position="372"/>
    </location>
</feature>
<feature type="domain" description="MIR 5" evidence="5">
    <location>
        <begin position="378"/>
        <end position="434"/>
    </location>
</feature>
<feature type="region of interest" description="Disordered" evidence="6">
    <location>
        <begin position="1138"/>
        <end position="1164"/>
    </location>
</feature>
<feature type="region of interest" description="Disordered" evidence="6">
    <location>
        <begin position="1807"/>
        <end position="1835"/>
    </location>
</feature>
<feature type="compositionally biased region" description="Basic and acidic residues" evidence="6">
    <location>
        <begin position="1138"/>
        <end position="1153"/>
    </location>
</feature>
<feature type="binding site" evidence="1">
    <location>
        <position position="266"/>
    </location>
    <ligand>
        <name>1D-myo-inositol 1,4,5-trisphosphate</name>
        <dbReference type="ChEBI" id="CHEBI:203600"/>
    </ligand>
</feature>
<feature type="binding site" evidence="1">
    <location>
        <position position="269"/>
    </location>
    <ligand>
        <name>1D-myo-inositol 1,4,5-trisphosphate</name>
        <dbReference type="ChEBI" id="CHEBI:203600"/>
    </ligand>
</feature>
<feature type="binding site" evidence="1">
    <location>
        <position position="270"/>
    </location>
    <ligand>
        <name>1D-myo-inositol 1,4,5-trisphosphate</name>
        <dbReference type="ChEBI" id="CHEBI:203600"/>
    </ligand>
</feature>
<feature type="binding site" evidence="1">
    <location>
        <position position="503"/>
    </location>
    <ligand>
        <name>1D-myo-inositol 1,4,5-trisphosphate</name>
        <dbReference type="ChEBI" id="CHEBI:203600"/>
    </ligand>
</feature>
<feature type="binding site" evidence="1">
    <location>
        <position position="507"/>
    </location>
    <ligand>
        <name>1D-myo-inositol 1,4,5-trisphosphate</name>
        <dbReference type="ChEBI" id="CHEBI:203600"/>
    </ligand>
</feature>
<feature type="binding site" evidence="1">
    <location>
        <position position="510"/>
    </location>
    <ligand>
        <name>1D-myo-inositol 1,4,5-trisphosphate</name>
        <dbReference type="ChEBI" id="CHEBI:203600"/>
    </ligand>
</feature>
<feature type="binding site" evidence="1">
    <location>
        <position position="567"/>
    </location>
    <ligand>
        <name>1D-myo-inositol 1,4,5-trisphosphate</name>
        <dbReference type="ChEBI" id="CHEBI:203600"/>
    </ligand>
</feature>
<feature type="binding site" evidence="1">
    <location>
        <position position="568"/>
    </location>
    <ligand>
        <name>1D-myo-inositol 1,4,5-trisphosphate</name>
        <dbReference type="ChEBI" id="CHEBI:203600"/>
    </ligand>
</feature>
<feature type="binding site" evidence="1">
    <location>
        <position position="569"/>
    </location>
    <ligand>
        <name>1D-myo-inositol 1,4,5-trisphosphate</name>
        <dbReference type="ChEBI" id="CHEBI:203600"/>
    </ligand>
</feature>
<feature type="binding site" evidence="1">
    <location>
        <position position="743"/>
    </location>
    <ligand>
        <name>Ca(2+)</name>
        <dbReference type="ChEBI" id="CHEBI:29108"/>
        <label>1</label>
        <note>low affinity</note>
    </ligand>
</feature>
<feature type="binding site" evidence="1">
    <location>
        <position position="1122"/>
    </location>
    <ligand>
        <name>Ca(2+)</name>
        <dbReference type="ChEBI" id="CHEBI:29108"/>
        <label>1</label>
        <note>low affinity</note>
    </ligand>
</feature>
<feature type="binding site" evidence="1">
    <location>
        <position position="1125"/>
    </location>
    <ligand>
        <name>Ca(2+)</name>
        <dbReference type="ChEBI" id="CHEBI:29108"/>
        <label>1</label>
        <note>low affinity</note>
    </ligand>
</feature>
<feature type="binding site" evidence="1">
    <location>
        <position position="1881"/>
    </location>
    <ligand>
        <name>Ca(2+)</name>
        <dbReference type="ChEBI" id="CHEBI:29108"/>
        <label>2</label>
        <note>high affinity</note>
    </ligand>
</feature>
<feature type="binding site" evidence="1">
    <location>
        <position position="1945"/>
    </location>
    <ligand>
        <name>Ca(2+)</name>
        <dbReference type="ChEBI" id="CHEBI:29108"/>
        <label>2</label>
        <note>high affinity</note>
    </ligand>
</feature>
<feature type="binding site" evidence="1">
    <location>
        <position position="1995"/>
    </location>
    <ligand>
        <name>ATP</name>
        <dbReference type="ChEBI" id="CHEBI:30616"/>
    </ligand>
</feature>
<feature type="binding site" evidence="1">
    <location>
        <position position="2148"/>
    </location>
    <ligand>
        <name>ATP</name>
        <dbReference type="ChEBI" id="CHEBI:30616"/>
    </ligand>
</feature>
<feature type="binding site" evidence="1">
    <location>
        <position position="2151"/>
    </location>
    <ligand>
        <name>ATP</name>
        <dbReference type="ChEBI" id="CHEBI:30616"/>
    </ligand>
</feature>
<feature type="binding site" evidence="1">
    <location>
        <position position="2537"/>
    </location>
    <ligand>
        <name>ATP</name>
        <dbReference type="ChEBI" id="CHEBI:30616"/>
    </ligand>
</feature>
<feature type="binding site" evidence="1">
    <location>
        <position position="2537"/>
    </location>
    <ligand>
        <name>Zn(2+)</name>
        <dbReference type="ChEBI" id="CHEBI:29105"/>
    </ligand>
</feature>
<feature type="binding site" evidence="1">
    <location>
        <position position="2538"/>
    </location>
    <ligand>
        <name>ATP</name>
        <dbReference type="ChEBI" id="CHEBI:30616"/>
    </ligand>
</feature>
<feature type="binding site" evidence="1">
    <location>
        <position position="2540"/>
    </location>
    <ligand>
        <name>Zn(2+)</name>
        <dbReference type="ChEBI" id="CHEBI:29105"/>
    </ligand>
</feature>
<feature type="binding site" evidence="1">
    <location>
        <position position="2557"/>
    </location>
    <ligand>
        <name>Zn(2+)</name>
        <dbReference type="ChEBI" id="CHEBI:29105"/>
    </ligand>
</feature>
<feature type="binding site" evidence="1">
    <location>
        <position position="2559"/>
    </location>
    <ligand>
        <name>ATP</name>
        <dbReference type="ChEBI" id="CHEBI:30616"/>
    </ligand>
</feature>
<feature type="binding site" evidence="1">
    <location>
        <position position="2562"/>
    </location>
    <ligand>
        <name>ATP</name>
        <dbReference type="ChEBI" id="CHEBI:30616"/>
    </ligand>
</feature>
<feature type="binding site" evidence="1">
    <location>
        <position position="2562"/>
    </location>
    <ligand>
        <name>Zn(2+)</name>
        <dbReference type="ChEBI" id="CHEBI:29105"/>
    </ligand>
</feature>
<feature type="binding site" evidence="1">
    <location>
        <position position="2563"/>
    </location>
    <ligand>
        <name>ATP</name>
        <dbReference type="ChEBI" id="CHEBI:30616"/>
    </ligand>
</feature>
<feature type="binding site" evidence="1">
    <location>
        <position position="2564"/>
    </location>
    <ligand>
        <name>ATP</name>
        <dbReference type="ChEBI" id="CHEBI:30616"/>
    </ligand>
</feature>
<feature type="binding site" evidence="1">
    <location>
        <position position="2580"/>
    </location>
    <ligand>
        <name>Ca(2+)</name>
        <dbReference type="ChEBI" id="CHEBI:29108"/>
        <label>2</label>
        <note>high affinity</note>
    </ligand>
</feature>
<feature type="modified residue" description="Phosphoserine" evidence="19 20">
    <location>
        <position position="916"/>
    </location>
</feature>
<feature type="modified residue" description="Phosphoserine" evidence="20">
    <location>
        <position position="934"/>
    </location>
</feature>
<feature type="modified residue" description="Phosphoserine" evidence="1">
    <location>
        <position position="1813"/>
    </location>
</feature>
<feature type="modified residue" description="Phosphoserine" evidence="20">
    <location>
        <position position="1832"/>
    </location>
</feature>
<feature type="modified residue" description="Phosphoserine" evidence="1">
    <location>
        <position position="1834"/>
    </location>
</feature>
<feature type="modified residue" description="Phosphoserine" evidence="1">
    <location>
        <position position="2608"/>
    </location>
</feature>
<feature type="modified residue" description="Phosphoserine" evidence="20">
    <location>
        <position position="2669"/>
    </location>
</feature>
<feature type="disulfide bond" evidence="1">
    <location>
        <begin position="2454"/>
        <end position="2460"/>
    </location>
</feature>
<feature type="mutagenesis site" description="Loss of calcium flux." evidence="10">
    <original>W</original>
    <variation>A</variation>
    <location>
        <position position="168"/>
    </location>
</feature>
<feature type="mutagenesis site" description="Loss of binding activity." evidence="8">
    <original>K</original>
    <variation>A</variation>
    <location>
        <position position="507"/>
    </location>
</feature>
<feature type="mutagenesis site" description="Loss of binding activity." evidence="8">
    <original>R</original>
    <variation>A</variation>
    <location>
        <position position="510"/>
    </location>
</feature>
<feature type="sequence conflict" description="In Ref. 4." evidence="16" ref="4">
    <original>SRASPLGM</original>
    <variation>FPPSRARR</variation>
    <location>
        <begin position="2406"/>
        <end position="2413"/>
    </location>
</feature>
<feature type="sequence conflict" description="In Ref. 4; M90088." evidence="16" ref="4">
    <original>D</original>
    <variation>E</variation>
    <location>
        <position position="2430"/>
    </location>
</feature>
<feature type="sequence conflict" description="In Ref. 4; M90088." evidence="16" ref="4">
    <original>P</original>
    <variation>L</variation>
    <location>
        <position position="2447"/>
    </location>
</feature>
<feature type="sequence conflict" description="In Ref. 4; M90088." evidence="16" ref="4">
    <original>RAMSL</original>
    <variation>LGSTS</variation>
    <location>
        <begin position="2605"/>
        <end position="2609"/>
    </location>
</feature>
<feature type="strand" evidence="21">
    <location>
        <begin position="13"/>
        <end position="29"/>
    </location>
</feature>
<feature type="strand" evidence="21">
    <location>
        <begin position="35"/>
        <end position="38"/>
    </location>
</feature>
<feature type="helix" evidence="21">
    <location>
        <begin position="40"/>
        <end position="42"/>
    </location>
</feature>
<feature type="strand" evidence="21">
    <location>
        <begin position="45"/>
        <end position="47"/>
    </location>
</feature>
<feature type="helix" evidence="21">
    <location>
        <begin position="52"/>
        <end position="55"/>
    </location>
</feature>
<feature type="strand" evidence="21">
    <location>
        <begin position="57"/>
        <end position="60"/>
    </location>
</feature>
<feature type="helix" evidence="21">
    <location>
        <begin position="66"/>
        <end position="74"/>
    </location>
</feature>
<feature type="helix" evidence="21">
    <location>
        <begin position="84"/>
        <end position="110"/>
    </location>
</feature>
<feature type="turn" evidence="21">
    <location>
        <begin position="111"/>
        <end position="113"/>
    </location>
</feature>
<feature type="strand" evidence="21">
    <location>
        <begin position="121"/>
        <end position="126"/>
    </location>
</feature>
<feature type="turn" evidence="21">
    <location>
        <begin position="127"/>
        <end position="130"/>
    </location>
</feature>
<feature type="strand" evidence="21">
    <location>
        <begin position="131"/>
        <end position="140"/>
    </location>
</feature>
<feature type="strand" evidence="21">
    <location>
        <begin position="142"/>
        <end position="144"/>
    </location>
</feature>
<feature type="strand" evidence="21">
    <location>
        <begin position="147"/>
        <end position="155"/>
    </location>
</feature>
<feature type="helix" evidence="21">
    <location>
        <begin position="158"/>
        <end position="160"/>
    </location>
</feature>
<feature type="strand" evidence="21">
    <location>
        <begin position="162"/>
        <end position="166"/>
    </location>
</feature>
<feature type="strand" evidence="21">
    <location>
        <begin position="182"/>
        <end position="187"/>
    </location>
</feature>
<feature type="turn" evidence="21">
    <location>
        <begin position="188"/>
        <end position="190"/>
    </location>
</feature>
<feature type="strand" evidence="21">
    <location>
        <begin position="194"/>
        <end position="201"/>
    </location>
</feature>
<feature type="strand" evidence="21">
    <location>
        <begin position="204"/>
        <end position="214"/>
    </location>
</feature>
<feature type="strand" evidence="21">
    <location>
        <begin position="218"/>
        <end position="223"/>
    </location>
</feature>